<name>TRPG_METTM</name>
<dbReference type="EC" id="4.1.3.27"/>
<dbReference type="EMBL" id="M65060">
    <property type="protein sequence ID" value="AAA73029.1"/>
    <property type="molecule type" value="Genomic_DNA"/>
</dbReference>
<dbReference type="EMBL" id="CP001710">
    <property type="protein sequence ID" value="ADL57844.1"/>
    <property type="status" value="ALT_INIT"/>
    <property type="molecule type" value="Genomic_DNA"/>
</dbReference>
<dbReference type="PIR" id="G40362">
    <property type="entry name" value="G40362"/>
</dbReference>
<dbReference type="RefSeq" id="WP_013295071.1">
    <property type="nucleotide sequence ID" value="NC_014408.1"/>
</dbReference>
<dbReference type="SMR" id="P26923"/>
<dbReference type="STRING" id="79929.MTBMA_c02350"/>
<dbReference type="MEROPS" id="C26.A25"/>
<dbReference type="PaxDb" id="79929-MTBMA_c02350"/>
<dbReference type="GeneID" id="9703941"/>
<dbReference type="KEGG" id="mmg:MTBMA_c02350"/>
<dbReference type="PATRIC" id="fig|79929.8.peg.231"/>
<dbReference type="HOGENOM" id="CLU_014340_1_2_2"/>
<dbReference type="OrthoDB" id="3321at2157"/>
<dbReference type="UniPathway" id="UPA00035">
    <property type="reaction ID" value="UER00040"/>
</dbReference>
<dbReference type="Proteomes" id="UP000000345">
    <property type="component" value="Chromosome"/>
</dbReference>
<dbReference type="GO" id="GO:0005829">
    <property type="term" value="C:cytosol"/>
    <property type="evidence" value="ECO:0007669"/>
    <property type="project" value="TreeGrafter"/>
</dbReference>
<dbReference type="GO" id="GO:0004049">
    <property type="term" value="F:anthranilate synthase activity"/>
    <property type="evidence" value="ECO:0007669"/>
    <property type="project" value="UniProtKB-EC"/>
</dbReference>
<dbReference type="GO" id="GO:0000162">
    <property type="term" value="P:L-tryptophan biosynthetic process"/>
    <property type="evidence" value="ECO:0007669"/>
    <property type="project" value="UniProtKB-UniPathway"/>
</dbReference>
<dbReference type="CDD" id="cd01743">
    <property type="entry name" value="GATase1_Anthranilate_Synthase"/>
    <property type="match status" value="1"/>
</dbReference>
<dbReference type="FunFam" id="3.40.50.880:FF:000003">
    <property type="entry name" value="Anthranilate synthase component II"/>
    <property type="match status" value="1"/>
</dbReference>
<dbReference type="Gene3D" id="3.40.50.880">
    <property type="match status" value="1"/>
</dbReference>
<dbReference type="InterPro" id="IPR050472">
    <property type="entry name" value="Anth_synth/Amidotransfase"/>
</dbReference>
<dbReference type="InterPro" id="IPR029062">
    <property type="entry name" value="Class_I_gatase-like"/>
</dbReference>
<dbReference type="InterPro" id="IPR017926">
    <property type="entry name" value="GATASE"/>
</dbReference>
<dbReference type="InterPro" id="IPR006221">
    <property type="entry name" value="TrpG/PapA_dom"/>
</dbReference>
<dbReference type="NCBIfam" id="TIGR00566">
    <property type="entry name" value="trpG_papA"/>
    <property type="match status" value="1"/>
</dbReference>
<dbReference type="PANTHER" id="PTHR43418:SF4">
    <property type="entry name" value="MULTIFUNCTIONAL TRYPTOPHAN BIOSYNTHESIS PROTEIN"/>
    <property type="match status" value="1"/>
</dbReference>
<dbReference type="PANTHER" id="PTHR43418">
    <property type="entry name" value="MULTIFUNCTIONAL TRYPTOPHAN BIOSYNTHESIS PROTEIN-RELATED"/>
    <property type="match status" value="1"/>
</dbReference>
<dbReference type="Pfam" id="PF00117">
    <property type="entry name" value="GATase"/>
    <property type="match status" value="1"/>
</dbReference>
<dbReference type="PRINTS" id="PR00097">
    <property type="entry name" value="ANTSNTHASEII"/>
</dbReference>
<dbReference type="PRINTS" id="PR00099">
    <property type="entry name" value="CPSGATASE"/>
</dbReference>
<dbReference type="PRINTS" id="PR00096">
    <property type="entry name" value="GATASE"/>
</dbReference>
<dbReference type="SUPFAM" id="SSF52317">
    <property type="entry name" value="Class I glutamine amidotransferase-like"/>
    <property type="match status" value="1"/>
</dbReference>
<dbReference type="PROSITE" id="PS51273">
    <property type="entry name" value="GATASE_TYPE_1"/>
    <property type="match status" value="1"/>
</dbReference>
<comment type="function">
    <text evidence="1">Part of a heterotetrameric complex that catalyzes the two-step biosynthesis of anthranilate, an intermediate in the biosynthesis of L-tryptophan. In the first step, the glutamine-binding beta subunit (TrpG) of anthranilate synthase (AS) provides the glutamine amidotransferase activity which generates ammonia as a substrate that, along with chorismate, is used in the second step, catalyzed by the large alpha subunit of AS (TrpE) to produce anthranilate. In the absence of TrpG, TrpE can synthesize anthranilate directly from chorismate and high concentrations of ammonia (By similarity).</text>
</comment>
<comment type="catalytic activity">
    <reaction>
        <text>chorismate + L-glutamine = anthranilate + pyruvate + L-glutamate + H(+)</text>
        <dbReference type="Rhea" id="RHEA:21732"/>
        <dbReference type="ChEBI" id="CHEBI:15361"/>
        <dbReference type="ChEBI" id="CHEBI:15378"/>
        <dbReference type="ChEBI" id="CHEBI:16567"/>
        <dbReference type="ChEBI" id="CHEBI:29748"/>
        <dbReference type="ChEBI" id="CHEBI:29985"/>
        <dbReference type="ChEBI" id="CHEBI:58359"/>
        <dbReference type="EC" id="4.1.3.27"/>
    </reaction>
</comment>
<comment type="pathway">
    <text>Amino-acid biosynthesis; L-tryptophan biosynthesis; L-tryptophan from chorismate: step 1/5.</text>
</comment>
<comment type="subunit">
    <text evidence="1">Heterotetramer consisting of two non-identical subunits: a beta subunit (TrpG) and a large alpha subunit (TrpE).</text>
</comment>
<comment type="sequence caution" evidence="4">
    <conflict type="erroneous initiation">
        <sequence resource="EMBL-CDS" id="ADL57844"/>
    </conflict>
    <text>Truncated N-terminus.</text>
</comment>
<organism>
    <name type="scientific">Methanothermobacter marburgensis (strain ATCC BAA-927 / DSM 2133 / JCM 14651 / NBRC 100331 / OCM 82 / Marburg)</name>
    <name type="common">Methanobacterium thermoautotrophicum</name>
    <dbReference type="NCBI Taxonomy" id="79929"/>
    <lineage>
        <taxon>Archaea</taxon>
        <taxon>Methanobacteriati</taxon>
        <taxon>Methanobacteriota</taxon>
        <taxon>Methanomada group</taxon>
        <taxon>Methanobacteria</taxon>
        <taxon>Methanobacteriales</taxon>
        <taxon>Methanobacteriaceae</taxon>
        <taxon>Methanothermobacter</taxon>
    </lineage>
</organism>
<gene>
    <name type="primary">trpG</name>
    <name type="ordered locus">MTBMA_c02350</name>
</gene>
<protein>
    <recommendedName>
        <fullName>Anthranilate synthase component 2</fullName>
        <shortName>AS</shortName>
        <shortName>ASII</shortName>
        <ecNumber>4.1.3.27</ecNumber>
    </recommendedName>
    <alternativeName>
        <fullName>Anthranilate synthase, GATase component</fullName>
    </alternativeName>
    <alternativeName>
        <fullName>Anthranilate synthase, glutamine amidotransferase component</fullName>
    </alternativeName>
</protein>
<proteinExistence type="inferred from homology"/>
<feature type="chain" id="PRO_0000056890" description="Anthranilate synthase component 2">
    <location>
        <begin position="1"/>
        <end position="196"/>
    </location>
</feature>
<feature type="domain" description="Glutamine amidotransferase type-1" evidence="3">
    <location>
        <begin position="4"/>
        <end position="196"/>
    </location>
</feature>
<feature type="active site" description="Nucleophile; for GATase activity" evidence="3">
    <location>
        <position position="89"/>
    </location>
</feature>
<feature type="active site" description="For GATase activity" evidence="3">
    <location>
        <position position="177"/>
    </location>
</feature>
<feature type="active site" description="For GATase activity" evidence="3">
    <location>
        <position position="179"/>
    </location>
</feature>
<feature type="binding site" evidence="2">
    <location>
        <begin position="60"/>
        <end position="62"/>
    </location>
    <ligand>
        <name>L-glutamine</name>
        <dbReference type="ChEBI" id="CHEBI:58359"/>
    </ligand>
</feature>
<feature type="binding site" evidence="2">
    <location>
        <position position="93"/>
    </location>
    <ligand>
        <name>L-glutamine</name>
        <dbReference type="ChEBI" id="CHEBI:58359"/>
    </ligand>
</feature>
<feature type="binding site" evidence="2">
    <location>
        <begin position="138"/>
        <end position="139"/>
    </location>
    <ligand>
        <name>L-glutamine</name>
        <dbReference type="ChEBI" id="CHEBI:58359"/>
    </ligand>
</feature>
<accession>P26923</accession>
<accession>D9PUE6</accession>
<sequence>MNKLILIIDNYDSFTHNLYQMAGEIMMEMDSADIMVVRNDEVDIDYVRGLDPERIIISPGPGNPIKREDFGICSEVIGEFTDRPILGVCLGHQGIFHYFGGVVGYGEPVHGKISEVFHDGSELFRGVPNPFRATRYHSLRCECSGVPEDILVSASAPDGTIMAIRHRQYPVYGLQFHPESAGTPHGRDILENFLRM</sequence>
<keyword id="KW-0028">Amino-acid biosynthesis</keyword>
<keyword id="KW-0057">Aromatic amino acid biosynthesis</keyword>
<keyword id="KW-0315">Glutamine amidotransferase</keyword>
<keyword id="KW-0456">Lyase</keyword>
<keyword id="KW-0822">Tryptophan biosynthesis</keyword>
<evidence type="ECO:0000250" key="1"/>
<evidence type="ECO:0000250" key="2">
    <source>
        <dbReference type="UniProtKB" id="P00900"/>
    </source>
</evidence>
<evidence type="ECO:0000255" key="3">
    <source>
        <dbReference type="PROSITE-ProRule" id="PRU00605"/>
    </source>
</evidence>
<evidence type="ECO:0000305" key="4"/>
<reference key="1">
    <citation type="journal article" date="1991" name="J. Bacteriol.">
        <title>Tryptophan gene cluster of Methanobacterium thermoautotrophicum Marburg: molecular cloning and nucleotide sequence of a putative trpEGCFBAD operon.</title>
        <authorList>
            <person name="Meile L."/>
            <person name="Stettler R."/>
            <person name="Banholzer R."/>
            <person name="Kotik M."/>
            <person name="Leisinger T."/>
        </authorList>
    </citation>
    <scope>NUCLEOTIDE SEQUENCE [GENOMIC DNA]</scope>
    <source>
        <strain>ATCC BAA-927 / DSM 2133 / JCM 14651 / NBRC 100331 / OCM 82 / Marburg</strain>
    </source>
</reference>
<reference key="2">
    <citation type="journal article" date="2010" name="J. Bacteriol.">
        <title>Complete genome sequence of Methanothermobacter marburgensis, a methanoarchaeon model organism.</title>
        <authorList>
            <person name="Liesegang H."/>
            <person name="Kaster A.K."/>
            <person name="Wiezer A."/>
            <person name="Goenrich M."/>
            <person name="Wollherr A."/>
            <person name="Seedorf H."/>
            <person name="Gottschalk G."/>
            <person name="Thauer R.K."/>
        </authorList>
    </citation>
    <scope>NUCLEOTIDE SEQUENCE [LARGE SCALE GENOMIC DNA]</scope>
    <source>
        <strain>ATCC BAA-927 / DSM 2133 / JCM 14651 / NBRC 100331 / OCM 82 / Marburg</strain>
    </source>
</reference>